<evidence type="ECO:0000255" key="1">
    <source>
        <dbReference type="HAMAP-Rule" id="MF_01151"/>
    </source>
</evidence>
<evidence type="ECO:0000256" key="2">
    <source>
        <dbReference type="SAM" id="MobiDB-lite"/>
    </source>
</evidence>
<name>GRPE_ACIB5</name>
<sequence length="184" mass="20359">MANEQNEQAQDIQNEQVEQSNEQTQAEGVEQANDVTVESLQAQITKLEENLKLEKARTANAVYEAQKSVERIQRESEKHKETVLEKFAKELLDSVDNLERAIQAAGDEETPVLEGVKLTLKSLLTTLEKFGVVEADTQNGFNADLHQAVGIDPNAKANEIGTVLQKGYTLNGRLLRPAMVMVGQ</sequence>
<protein>
    <recommendedName>
        <fullName evidence="1">Protein GrpE</fullName>
    </recommendedName>
    <alternativeName>
        <fullName evidence="1">HSP-70 cofactor</fullName>
    </alternativeName>
</protein>
<feature type="chain" id="PRO_1000137523" description="Protein GrpE">
    <location>
        <begin position="1"/>
        <end position="184"/>
    </location>
</feature>
<feature type="region of interest" description="Disordered" evidence="2">
    <location>
        <begin position="1"/>
        <end position="34"/>
    </location>
</feature>
<feature type="compositionally biased region" description="Polar residues" evidence="2">
    <location>
        <begin position="1"/>
        <end position="26"/>
    </location>
</feature>
<comment type="function">
    <text evidence="1">Participates actively in the response to hyperosmotic and heat shock by preventing the aggregation of stress-denatured proteins, in association with DnaK and GrpE. It is the nucleotide exchange factor for DnaK and may function as a thermosensor. Unfolded proteins bind initially to DnaJ; upon interaction with the DnaJ-bound protein, DnaK hydrolyzes its bound ATP, resulting in the formation of a stable complex. GrpE releases ADP from DnaK; ATP binding to DnaK triggers the release of the substrate protein, thus completing the reaction cycle. Several rounds of ATP-dependent interactions between DnaJ, DnaK and GrpE are required for fully efficient folding.</text>
</comment>
<comment type="subunit">
    <text evidence="1">Homodimer.</text>
</comment>
<comment type="subcellular location">
    <subcellularLocation>
        <location evidence="1">Cytoplasm</location>
    </subcellularLocation>
</comment>
<comment type="similarity">
    <text evidence="1">Belongs to the GrpE family.</text>
</comment>
<reference key="1">
    <citation type="journal article" date="2008" name="J. Bacteriol.">
        <title>Comparative genome sequence analysis of multidrug-resistant Acinetobacter baumannii.</title>
        <authorList>
            <person name="Adams M.D."/>
            <person name="Goglin K."/>
            <person name="Molyneaux N."/>
            <person name="Hujer K.M."/>
            <person name="Lavender H."/>
            <person name="Jamison J.J."/>
            <person name="MacDonald I.J."/>
            <person name="Martin K.M."/>
            <person name="Russo T."/>
            <person name="Campagnari A.A."/>
            <person name="Hujer A.M."/>
            <person name="Bonomo R.A."/>
            <person name="Gill S.R."/>
        </authorList>
    </citation>
    <scope>NUCLEOTIDE SEQUENCE [LARGE SCALE GENOMIC DNA]</scope>
    <source>
        <strain>AB0057</strain>
    </source>
</reference>
<accession>B7IBK6</accession>
<proteinExistence type="inferred from homology"/>
<keyword id="KW-0143">Chaperone</keyword>
<keyword id="KW-0963">Cytoplasm</keyword>
<keyword id="KW-0346">Stress response</keyword>
<organism>
    <name type="scientific">Acinetobacter baumannii (strain AB0057)</name>
    <dbReference type="NCBI Taxonomy" id="480119"/>
    <lineage>
        <taxon>Bacteria</taxon>
        <taxon>Pseudomonadati</taxon>
        <taxon>Pseudomonadota</taxon>
        <taxon>Gammaproteobacteria</taxon>
        <taxon>Moraxellales</taxon>
        <taxon>Moraxellaceae</taxon>
        <taxon>Acinetobacter</taxon>
        <taxon>Acinetobacter calcoaceticus/baumannii complex</taxon>
    </lineage>
</organism>
<gene>
    <name evidence="1" type="primary">grpE</name>
    <name type="ordered locus">AB57_0049</name>
</gene>
<dbReference type="EMBL" id="CP001182">
    <property type="protein sequence ID" value="ACJ39481.1"/>
    <property type="molecule type" value="Genomic_DNA"/>
</dbReference>
<dbReference type="RefSeq" id="WP_001262789.1">
    <property type="nucleotide sequence ID" value="NC_011586.2"/>
</dbReference>
<dbReference type="SMR" id="B7IBK6"/>
<dbReference type="GeneID" id="92891967"/>
<dbReference type="KEGG" id="abn:AB57_0049"/>
<dbReference type="HOGENOM" id="CLU_057217_6_0_6"/>
<dbReference type="Proteomes" id="UP000007094">
    <property type="component" value="Chromosome"/>
</dbReference>
<dbReference type="GO" id="GO:0005829">
    <property type="term" value="C:cytosol"/>
    <property type="evidence" value="ECO:0007669"/>
    <property type="project" value="TreeGrafter"/>
</dbReference>
<dbReference type="GO" id="GO:0000774">
    <property type="term" value="F:adenyl-nucleotide exchange factor activity"/>
    <property type="evidence" value="ECO:0007669"/>
    <property type="project" value="InterPro"/>
</dbReference>
<dbReference type="GO" id="GO:0042803">
    <property type="term" value="F:protein homodimerization activity"/>
    <property type="evidence" value="ECO:0007669"/>
    <property type="project" value="InterPro"/>
</dbReference>
<dbReference type="GO" id="GO:0051087">
    <property type="term" value="F:protein-folding chaperone binding"/>
    <property type="evidence" value="ECO:0007669"/>
    <property type="project" value="InterPro"/>
</dbReference>
<dbReference type="GO" id="GO:0051082">
    <property type="term" value="F:unfolded protein binding"/>
    <property type="evidence" value="ECO:0007669"/>
    <property type="project" value="TreeGrafter"/>
</dbReference>
<dbReference type="GO" id="GO:0006457">
    <property type="term" value="P:protein folding"/>
    <property type="evidence" value="ECO:0007669"/>
    <property type="project" value="InterPro"/>
</dbReference>
<dbReference type="CDD" id="cd00446">
    <property type="entry name" value="GrpE"/>
    <property type="match status" value="1"/>
</dbReference>
<dbReference type="Gene3D" id="3.90.20.20">
    <property type="match status" value="1"/>
</dbReference>
<dbReference type="Gene3D" id="2.30.22.10">
    <property type="entry name" value="Head domain of nucleotide exchange factor GrpE"/>
    <property type="match status" value="1"/>
</dbReference>
<dbReference type="HAMAP" id="MF_01151">
    <property type="entry name" value="GrpE"/>
    <property type="match status" value="1"/>
</dbReference>
<dbReference type="InterPro" id="IPR000740">
    <property type="entry name" value="GrpE"/>
</dbReference>
<dbReference type="InterPro" id="IPR013805">
    <property type="entry name" value="GrpE_coiled_coil"/>
</dbReference>
<dbReference type="InterPro" id="IPR009012">
    <property type="entry name" value="GrpE_head"/>
</dbReference>
<dbReference type="PANTHER" id="PTHR21237">
    <property type="entry name" value="GRPE PROTEIN"/>
    <property type="match status" value="1"/>
</dbReference>
<dbReference type="PANTHER" id="PTHR21237:SF23">
    <property type="entry name" value="GRPE PROTEIN HOMOLOG, MITOCHONDRIAL"/>
    <property type="match status" value="1"/>
</dbReference>
<dbReference type="Pfam" id="PF01025">
    <property type="entry name" value="GrpE"/>
    <property type="match status" value="1"/>
</dbReference>
<dbReference type="PRINTS" id="PR00773">
    <property type="entry name" value="GRPEPROTEIN"/>
</dbReference>
<dbReference type="SUPFAM" id="SSF58014">
    <property type="entry name" value="Coiled-coil domain of nucleotide exchange factor GrpE"/>
    <property type="match status" value="1"/>
</dbReference>
<dbReference type="SUPFAM" id="SSF51064">
    <property type="entry name" value="Head domain of nucleotide exchange factor GrpE"/>
    <property type="match status" value="1"/>
</dbReference>
<dbReference type="PROSITE" id="PS01071">
    <property type="entry name" value="GRPE"/>
    <property type="match status" value="1"/>
</dbReference>